<gene>
    <name evidence="1" type="primary">pckA</name>
    <name type="ordered locus">SG2317</name>
</gene>
<feature type="chain" id="PRO_0000236947" description="Phosphoenolpyruvate carboxykinase (ATP)">
    <location>
        <begin position="1"/>
        <end position="539"/>
    </location>
</feature>
<feature type="binding site" evidence="1">
    <location>
        <position position="64"/>
    </location>
    <ligand>
        <name>substrate</name>
    </ligand>
</feature>
<feature type="binding site" evidence="1">
    <location>
        <position position="206"/>
    </location>
    <ligand>
        <name>substrate</name>
    </ligand>
</feature>
<feature type="binding site" evidence="1">
    <location>
        <position position="212"/>
    </location>
    <ligand>
        <name>ATP</name>
        <dbReference type="ChEBI" id="CHEBI:30616"/>
    </ligand>
</feature>
<feature type="binding site" evidence="1">
    <location>
        <position position="212"/>
    </location>
    <ligand>
        <name>Mn(2+)</name>
        <dbReference type="ChEBI" id="CHEBI:29035"/>
    </ligand>
</feature>
<feature type="binding site" evidence="1">
    <location>
        <position position="212"/>
    </location>
    <ligand>
        <name>substrate</name>
    </ligand>
</feature>
<feature type="binding site" evidence="1">
    <location>
        <position position="231"/>
    </location>
    <ligand>
        <name>ATP</name>
        <dbReference type="ChEBI" id="CHEBI:30616"/>
    </ligand>
</feature>
<feature type="binding site" evidence="1">
    <location>
        <position position="231"/>
    </location>
    <ligand>
        <name>Mn(2+)</name>
        <dbReference type="ChEBI" id="CHEBI:29035"/>
    </ligand>
</feature>
<feature type="binding site" evidence="1">
    <location>
        <begin position="247"/>
        <end position="255"/>
    </location>
    <ligand>
        <name>ATP</name>
        <dbReference type="ChEBI" id="CHEBI:30616"/>
    </ligand>
</feature>
<feature type="binding site" evidence="1">
    <location>
        <position position="268"/>
    </location>
    <ligand>
        <name>Mn(2+)</name>
        <dbReference type="ChEBI" id="CHEBI:29035"/>
    </ligand>
</feature>
<feature type="binding site" evidence="1">
    <location>
        <position position="296"/>
    </location>
    <ligand>
        <name>ATP</name>
        <dbReference type="ChEBI" id="CHEBI:30616"/>
    </ligand>
</feature>
<feature type="binding site" evidence="1">
    <location>
        <position position="332"/>
    </location>
    <ligand>
        <name>ATP</name>
        <dbReference type="ChEBI" id="CHEBI:30616"/>
    </ligand>
</feature>
<feature type="binding site" evidence="1">
    <location>
        <position position="332"/>
    </location>
    <ligand>
        <name>substrate</name>
    </ligand>
</feature>
<feature type="binding site" evidence="1">
    <location>
        <begin position="448"/>
        <end position="449"/>
    </location>
    <ligand>
        <name>ATP</name>
        <dbReference type="ChEBI" id="CHEBI:30616"/>
    </ligand>
</feature>
<feature type="binding site" evidence="1">
    <location>
        <position position="454"/>
    </location>
    <ligand>
        <name>ATP</name>
        <dbReference type="ChEBI" id="CHEBI:30616"/>
    </ligand>
</feature>
<proteinExistence type="inferred from homology"/>
<accession>Q2NQI3</accession>
<protein>
    <recommendedName>
        <fullName evidence="1">Phosphoenolpyruvate carboxykinase (ATP)</fullName>
        <shortName evidence="1">PCK</shortName>
        <shortName evidence="1">PEP carboxykinase</shortName>
        <shortName evidence="1">PEPCK</shortName>
        <ecNumber evidence="1">4.1.1.49</ecNumber>
    </recommendedName>
</protein>
<sequence length="539" mass="59267">MVSESITPQQWISYGITGYRELVYNPGYDQLFAEEIDPALSGFERGTLTQSGAVAVDTGIFTGRSPFDKYVVRDDKTRDTLWWSDQGKGANDNHPLDQQTWVHLKRRVGKQLSGKRLFVIDAFCGANEDSRLRVRFVTEVAWQAHFVKNMFIRPSDEELRDFEPDFVVLNGAKCTNPDWREQGLHSENFVAFNLTEGIQLIGGTWYGGEMKKGLFSVMNYLLPLKGIASMHCSANVGTDDDVALFFGLSGTGKTTLSTDPRRRLIGDDEHGWDDDGVFNFEGGCYAKTIRLSPEAEPEIYQAIRRNALLENVVVRADGSVDYDDGSKTENARVSYPIDHIDNIVKPVSRAGHATRVIFLTADAFGVLPPVASLSMEQAQYHFLSGFTAKLGGTERGVVAPVPTFSACFGAAFLSLHPTAYADVLAKRMHAAGARAYLVNTGWNGSGKRISLKDTRTIINAILRSDIDDAPTATLPVFNLTIPTALPGVNGAILDPRTTYASVDEWRAKADDLAQRFIDNFSKFTDTPAGVALVSAGPQR</sequence>
<dbReference type="EC" id="4.1.1.49" evidence="1"/>
<dbReference type="EMBL" id="AP008232">
    <property type="protein sequence ID" value="BAE75592.1"/>
    <property type="molecule type" value="Genomic_DNA"/>
</dbReference>
<dbReference type="RefSeq" id="WP_011412125.1">
    <property type="nucleotide sequence ID" value="NC_007712.1"/>
</dbReference>
<dbReference type="SMR" id="Q2NQI3"/>
<dbReference type="STRING" id="343509.SG2317"/>
<dbReference type="KEGG" id="sgl:SG2317"/>
<dbReference type="eggNOG" id="COG1866">
    <property type="taxonomic scope" value="Bacteria"/>
</dbReference>
<dbReference type="HOGENOM" id="CLU_018247_0_1_6"/>
<dbReference type="OrthoDB" id="9806325at2"/>
<dbReference type="BioCyc" id="SGLO343509:SGP1_RS21110-MONOMER"/>
<dbReference type="UniPathway" id="UPA00138"/>
<dbReference type="Proteomes" id="UP000001932">
    <property type="component" value="Chromosome"/>
</dbReference>
<dbReference type="GO" id="GO:0005829">
    <property type="term" value="C:cytosol"/>
    <property type="evidence" value="ECO:0007669"/>
    <property type="project" value="TreeGrafter"/>
</dbReference>
<dbReference type="GO" id="GO:0005524">
    <property type="term" value="F:ATP binding"/>
    <property type="evidence" value="ECO:0007669"/>
    <property type="project" value="UniProtKB-UniRule"/>
</dbReference>
<dbReference type="GO" id="GO:0046872">
    <property type="term" value="F:metal ion binding"/>
    <property type="evidence" value="ECO:0007669"/>
    <property type="project" value="UniProtKB-KW"/>
</dbReference>
<dbReference type="GO" id="GO:0004612">
    <property type="term" value="F:phosphoenolpyruvate carboxykinase (ATP) activity"/>
    <property type="evidence" value="ECO:0007669"/>
    <property type="project" value="UniProtKB-UniRule"/>
</dbReference>
<dbReference type="GO" id="GO:0006094">
    <property type="term" value="P:gluconeogenesis"/>
    <property type="evidence" value="ECO:0007669"/>
    <property type="project" value="UniProtKB-UniRule"/>
</dbReference>
<dbReference type="CDD" id="cd00484">
    <property type="entry name" value="PEPCK_ATP"/>
    <property type="match status" value="1"/>
</dbReference>
<dbReference type="FunFam" id="3.40.449.10:FF:000001">
    <property type="entry name" value="Phosphoenolpyruvate carboxykinase (ATP)"/>
    <property type="match status" value="1"/>
</dbReference>
<dbReference type="Gene3D" id="3.90.228.20">
    <property type="match status" value="1"/>
</dbReference>
<dbReference type="Gene3D" id="3.40.449.10">
    <property type="entry name" value="Phosphoenolpyruvate Carboxykinase, domain 1"/>
    <property type="match status" value="1"/>
</dbReference>
<dbReference type="Gene3D" id="2.170.8.10">
    <property type="entry name" value="Phosphoenolpyruvate Carboxykinase, domain 2"/>
    <property type="match status" value="1"/>
</dbReference>
<dbReference type="HAMAP" id="MF_00453">
    <property type="entry name" value="PEPCK_ATP"/>
    <property type="match status" value="1"/>
</dbReference>
<dbReference type="InterPro" id="IPR001272">
    <property type="entry name" value="PEP_carboxykinase_ATP"/>
</dbReference>
<dbReference type="InterPro" id="IPR013035">
    <property type="entry name" value="PEP_carboxykinase_C"/>
</dbReference>
<dbReference type="InterPro" id="IPR008210">
    <property type="entry name" value="PEP_carboxykinase_N"/>
</dbReference>
<dbReference type="InterPro" id="IPR015994">
    <property type="entry name" value="PEPCK_ATP_CS"/>
</dbReference>
<dbReference type="NCBIfam" id="TIGR00224">
    <property type="entry name" value="pckA"/>
    <property type="match status" value="1"/>
</dbReference>
<dbReference type="NCBIfam" id="NF006819">
    <property type="entry name" value="PRK09344.1-1"/>
    <property type="match status" value="1"/>
</dbReference>
<dbReference type="NCBIfam" id="NF006820">
    <property type="entry name" value="PRK09344.1-2"/>
    <property type="match status" value="1"/>
</dbReference>
<dbReference type="NCBIfam" id="NF006821">
    <property type="entry name" value="PRK09344.1-3"/>
    <property type="match status" value="1"/>
</dbReference>
<dbReference type="PANTHER" id="PTHR30031:SF0">
    <property type="entry name" value="PHOSPHOENOLPYRUVATE CARBOXYKINASE (ATP)"/>
    <property type="match status" value="1"/>
</dbReference>
<dbReference type="PANTHER" id="PTHR30031">
    <property type="entry name" value="PHOSPHOENOLPYRUVATE CARBOXYKINASE ATP"/>
    <property type="match status" value="1"/>
</dbReference>
<dbReference type="Pfam" id="PF01293">
    <property type="entry name" value="PEPCK_ATP"/>
    <property type="match status" value="1"/>
</dbReference>
<dbReference type="PIRSF" id="PIRSF006294">
    <property type="entry name" value="PEP_crbxkin"/>
    <property type="match status" value="1"/>
</dbReference>
<dbReference type="SUPFAM" id="SSF68923">
    <property type="entry name" value="PEP carboxykinase N-terminal domain"/>
    <property type="match status" value="1"/>
</dbReference>
<dbReference type="SUPFAM" id="SSF53795">
    <property type="entry name" value="PEP carboxykinase-like"/>
    <property type="match status" value="1"/>
</dbReference>
<dbReference type="PROSITE" id="PS00532">
    <property type="entry name" value="PEPCK_ATP"/>
    <property type="match status" value="1"/>
</dbReference>
<comment type="function">
    <text evidence="1">Involved in the gluconeogenesis. Catalyzes the conversion of oxaloacetate (OAA) to phosphoenolpyruvate (PEP) through direct phosphoryl transfer between the nucleoside triphosphate and OAA.</text>
</comment>
<comment type="catalytic activity">
    <reaction evidence="1">
        <text>oxaloacetate + ATP = phosphoenolpyruvate + ADP + CO2</text>
        <dbReference type="Rhea" id="RHEA:18617"/>
        <dbReference type="ChEBI" id="CHEBI:16452"/>
        <dbReference type="ChEBI" id="CHEBI:16526"/>
        <dbReference type="ChEBI" id="CHEBI:30616"/>
        <dbReference type="ChEBI" id="CHEBI:58702"/>
        <dbReference type="ChEBI" id="CHEBI:456216"/>
        <dbReference type="EC" id="4.1.1.49"/>
    </reaction>
</comment>
<comment type="cofactor">
    <cofactor evidence="1">
        <name>Mn(2+)</name>
        <dbReference type="ChEBI" id="CHEBI:29035"/>
    </cofactor>
    <text evidence="1">Binds 1 Mn(2+) ion per subunit.</text>
</comment>
<comment type="pathway">
    <text evidence="1">Carbohydrate biosynthesis; gluconeogenesis.</text>
</comment>
<comment type="subunit">
    <text evidence="1">Monomer.</text>
</comment>
<comment type="subcellular location">
    <subcellularLocation>
        <location evidence="1">Cytoplasm</location>
    </subcellularLocation>
</comment>
<comment type="similarity">
    <text evidence="1">Belongs to the phosphoenolpyruvate carboxykinase (ATP) family.</text>
</comment>
<reference key="1">
    <citation type="journal article" date="2006" name="Genome Res.">
        <title>Massive genome erosion and functional adaptations provide insights into the symbiotic lifestyle of Sodalis glossinidius in the tsetse host.</title>
        <authorList>
            <person name="Toh H."/>
            <person name="Weiss B.L."/>
            <person name="Perkin S.A.H."/>
            <person name="Yamashita A."/>
            <person name="Oshima K."/>
            <person name="Hattori M."/>
            <person name="Aksoy S."/>
        </authorList>
    </citation>
    <scope>NUCLEOTIDE SEQUENCE [LARGE SCALE GENOMIC DNA]</scope>
    <source>
        <strain>morsitans</strain>
    </source>
</reference>
<name>PCKA_SODGM</name>
<evidence type="ECO:0000255" key="1">
    <source>
        <dbReference type="HAMAP-Rule" id="MF_00453"/>
    </source>
</evidence>
<keyword id="KW-0067">ATP-binding</keyword>
<keyword id="KW-0963">Cytoplasm</keyword>
<keyword id="KW-0210">Decarboxylase</keyword>
<keyword id="KW-0312">Gluconeogenesis</keyword>
<keyword id="KW-0456">Lyase</keyword>
<keyword id="KW-0464">Manganese</keyword>
<keyword id="KW-0479">Metal-binding</keyword>
<keyword id="KW-0547">Nucleotide-binding</keyword>
<organism>
    <name type="scientific">Sodalis glossinidius (strain morsitans)</name>
    <dbReference type="NCBI Taxonomy" id="343509"/>
    <lineage>
        <taxon>Bacteria</taxon>
        <taxon>Pseudomonadati</taxon>
        <taxon>Pseudomonadota</taxon>
        <taxon>Gammaproteobacteria</taxon>
        <taxon>Enterobacterales</taxon>
        <taxon>Bruguierivoracaceae</taxon>
        <taxon>Sodalis</taxon>
    </lineage>
</organism>